<keyword id="KW-0325">Glycoprotein</keyword>
<keyword id="KW-1035">Host cytoplasm</keyword>
<keyword id="KW-0945">Host-virus interaction</keyword>
<keyword id="KW-0460">Magnesium</keyword>
<keyword id="KW-0479">Metal-binding</keyword>
<keyword id="KW-0547">Nucleotide-binding</keyword>
<keyword id="KW-0597">Phosphoprotein</keyword>
<keyword id="KW-0694">RNA-binding</keyword>
<feature type="chain" id="PRO_0000369508" description="Non-structural protein 5">
    <location>
        <begin position="1"/>
        <end position="198"/>
    </location>
</feature>
<feature type="region of interest" description="Disordered" evidence="2">
    <location>
        <begin position="16"/>
        <end position="37"/>
    </location>
</feature>
<feature type="region of interest" description="Disordered" evidence="2">
    <location>
        <begin position="53"/>
        <end position="72"/>
    </location>
</feature>
<feature type="region of interest" description="Disordered" evidence="2">
    <location>
        <begin position="85"/>
        <end position="104"/>
    </location>
</feature>
<feature type="compositionally biased region" description="Low complexity" evidence="2">
    <location>
        <begin position="16"/>
        <end position="30"/>
    </location>
</feature>
<feature type="compositionally biased region" description="Polar residues" evidence="2">
    <location>
        <begin position="91"/>
        <end position="104"/>
    </location>
</feature>
<feature type="binding site" evidence="1">
    <location>
        <position position="92"/>
    </location>
    <ligand>
        <name>Mg(2+)</name>
        <dbReference type="ChEBI" id="CHEBI:18420"/>
    </ligand>
</feature>
<feature type="modified residue" description="Phosphoserine; by host CK1" evidence="1">
    <location>
        <position position="67"/>
    </location>
</feature>
<feature type="modified residue" description="Phosphoserine; by host" evidence="1">
    <location>
        <position position="154"/>
    </location>
</feature>
<feature type="modified residue" description="Phosphoserine; by host" evidence="1">
    <location>
        <position position="156"/>
    </location>
</feature>
<feature type="modified residue" description="Phosphoserine; by host" evidence="1">
    <location>
        <position position="164"/>
    </location>
</feature>
<feature type="modified residue" description="Phosphoserine; by host" evidence="1">
    <location>
        <position position="166"/>
    </location>
</feature>
<sequence length="198" mass="21639">MSLSIDVTSLPSISSSIYKHESSSTTSTLSGKSIGRSEQYVSPDAEAFNKYMLSKSPEDIGPSDSASNDPLTSFSIRSNAVKTNADAGVSMDSSTQSRPSSNVGCDQVDFSLSKGIKVNANLDSSISVSTVSKKEKSKSDHKNRKHYPRIEADSDSDEYVLDDSDSDDGKCKNCKYKKKYFALRMRMKQVAMQLIEDL</sequence>
<protein>
    <recommendedName>
        <fullName evidence="1">Non-structural protein 5</fullName>
        <shortName evidence="1">NSP5</shortName>
    </recommendedName>
    <alternativeName>
        <fullName evidence="1">NS26</fullName>
    </alternativeName>
</protein>
<organism>
    <name type="scientific">Rotavirus A (strain RVA/Monkey/United States/RRV/1975/G3P5B[3])</name>
    <name type="common">RV-A</name>
    <dbReference type="NCBI Taxonomy" id="444185"/>
    <lineage>
        <taxon>Viruses</taxon>
        <taxon>Riboviria</taxon>
        <taxon>Orthornavirae</taxon>
        <taxon>Duplornaviricota</taxon>
        <taxon>Resentoviricetes</taxon>
        <taxon>Reovirales</taxon>
        <taxon>Sedoreoviridae</taxon>
        <taxon>Rotavirus</taxon>
        <taxon>Rotavirus A</taxon>
    </lineage>
</organism>
<accession>Q993T4</accession>
<reference key="1">
    <citation type="journal article" date="2001" name="Virus Genes">
        <title>Nucleotide sequence analysis of rotavirus gene 11 from two tissue culture-adapted ATCC strains, RRV and Wa.</title>
        <authorList>
            <person name="Mohan K.V.K."/>
            <person name="Atreya C.D."/>
        </authorList>
    </citation>
    <scope>NUCLEOTIDE SEQUENCE [GENOMIC RNA]</scope>
</reference>
<reference key="2">
    <citation type="journal article" date="2018" name="J. Virol.">
        <title>Rotavirus Induces Formation of Remodeled Stress Granules and P Bodies and Their Sequestration in Viroplasms To Promote Progeny Virus Production.</title>
        <authorList>
            <person name="Dhillon P."/>
            <person name="Rao C.D."/>
        </authorList>
    </citation>
    <scope>FUNCTION</scope>
    <scope>INTERACTION WITH HOST DCP1A</scope>
    <scope>INTERACTION WITH HOST DCP1B</scope>
    <scope>INTERACTION WITH HOST DDX6</scope>
    <scope>INTERACTION WITH HOST EDC4</scope>
    <scope>INTERACTION WITH HOST EIF2S1</scope>
    <scope>INTERACTION WITH HOST CAPRIN1</scope>
    <scope>INTERACTION WITH HOST AGO2</scope>
</reference>
<comment type="function">
    <text evidence="1 3">Plays an essential role in the viral genome replication. Participates, together with NSP2, in the formation of viral factories (viroplasms), which are large inclusions in the host cytoplasm where replication intermediates are assembled and viral RNA replication takes place. Orchestrates the recruitment of viroplasmic proteins such as capsid proteins to these factories (By similarity). Participates in the selective exclusion of host proteins from stress granules (SG) and P bodies (PB) (PubMed:30258011). Also participates in the sequestration of these remodeled organelles in viral factories (PubMed:30258011).</text>
</comment>
<comment type="cofactor">
    <cofactor evidence="1">
        <name>Mg(2+)</name>
        <dbReference type="ChEBI" id="CHEBI:18420"/>
    </cofactor>
</comment>
<comment type="subunit">
    <text evidence="1 3">Homodimer. Interacts with VP1. Interacts with VP2. Interacts with NSP2; this interaction leads to up-regulation of NSP5 hyperphosphorylation and formation of virus factories. Interacts with NSP6. Interacts with host DCP1A, DCP1B, DDX6, EDC4, EIF2S1, AGO2 and CAPRIN1; these interactions are probably part of the sequestration of some host SGs and PBs proteins in viral factories.</text>
</comment>
<comment type="subcellular location">
    <subcellularLocation>
        <location evidence="1">Host cytoplasm</location>
    </subcellularLocation>
    <text evidence="1">Found in spherical cytoplasmic structures, called virus factories, that appear early after infection and are the site of viral replication and packaging.</text>
</comment>
<comment type="PTM">
    <text evidence="1">O-glycosylated.</text>
</comment>
<comment type="PTM">
    <text evidence="1">Hyperphosphorylated on serine residues, when in dimeric form. Phosphorylation by host CK1 is required for the hyperphosphorylation of NSP5 dimer.</text>
</comment>
<comment type="similarity">
    <text evidence="1">Belongs to the rotavirus NSP5 family.</text>
</comment>
<proteinExistence type="evidence at protein level"/>
<name>NSP5_ROTRH</name>
<evidence type="ECO:0000255" key="1">
    <source>
        <dbReference type="HAMAP-Rule" id="MF_04092"/>
    </source>
</evidence>
<evidence type="ECO:0000256" key="2">
    <source>
        <dbReference type="SAM" id="MobiDB-lite"/>
    </source>
</evidence>
<evidence type="ECO:0000269" key="3">
    <source>
    </source>
</evidence>
<organismHost>
    <name type="scientific">Macaca mulatta</name>
    <name type="common">Rhesus macaque</name>
    <dbReference type="NCBI Taxonomy" id="9544"/>
</organismHost>
<dbReference type="EMBL" id="AF306492">
    <property type="protein sequence ID" value="AAK15265.1"/>
    <property type="molecule type" value="Genomic_RNA"/>
</dbReference>
<dbReference type="GO" id="GO:0030430">
    <property type="term" value="C:host cell cytoplasm"/>
    <property type="evidence" value="ECO:0007669"/>
    <property type="project" value="UniProtKB-SubCell"/>
</dbReference>
<dbReference type="GO" id="GO:0016887">
    <property type="term" value="F:ATP hydrolysis activity"/>
    <property type="evidence" value="ECO:0007669"/>
    <property type="project" value="UniProtKB-UniRule"/>
</dbReference>
<dbReference type="GO" id="GO:0000287">
    <property type="term" value="F:magnesium ion binding"/>
    <property type="evidence" value="ECO:0007669"/>
    <property type="project" value="UniProtKB-UniRule"/>
</dbReference>
<dbReference type="GO" id="GO:0000166">
    <property type="term" value="F:nucleotide binding"/>
    <property type="evidence" value="ECO:0007669"/>
    <property type="project" value="UniProtKB-UniRule"/>
</dbReference>
<dbReference type="GO" id="GO:0003723">
    <property type="term" value="F:RNA binding"/>
    <property type="evidence" value="ECO:0007669"/>
    <property type="project" value="UniProtKB-UniRule"/>
</dbReference>
<dbReference type="GO" id="GO:0019079">
    <property type="term" value="P:viral genome replication"/>
    <property type="evidence" value="ECO:0007669"/>
    <property type="project" value="UniProtKB-UniRule"/>
</dbReference>
<dbReference type="HAMAP" id="MF_04092">
    <property type="entry name" value="ROTA_NSP5"/>
    <property type="match status" value="1"/>
</dbReference>
<dbReference type="InterPro" id="IPR002512">
    <property type="entry name" value="Rotavirus_A/C_NSP5"/>
</dbReference>
<dbReference type="Pfam" id="PF01525">
    <property type="entry name" value="Rota_NS26"/>
    <property type="match status" value="2"/>
</dbReference>
<dbReference type="PIRSF" id="PIRSF004006">
    <property type="entry name" value="Rota_NS26"/>
    <property type="match status" value="1"/>
</dbReference>